<accession>Q9CYD3</accession>
<accession>O88698</accession>
<accession>Q8C8C5</accession>
<sequence>MGPRSPTAALLVLLCVGCAPTPGRGQYERYSFRSFPRDELMPLESAYRHALDQYSGEHWAESVGYLEVSLRLHRLLRDSEAFCHRNCSAATPAPAPAGPASHAELRLFGSVLRRAQCLKRCKQGLPAFRQSQPSRSVLADFQQREPYKFLQFAYFKANDLPKAIAAAHTYLLKHPDDEMMKRNMEYYKSLPGAEDHIKDLETKSYESLFVRAVRAYNGENWRTSISDMELALPDFLKAFYECLAACEGSREIKDFKDFYLSIADHYVEVLECKIRCEETLTPVIGGYPVEKFVATMYHYLQFAYYKLNDLKNAAPCAVSYLLFDQSDRVMQQNLVYYQYHRDKWGLSDEHFQPRPEAVQFFNVTTLQKELYDFAQEHLMDDDEGEVVEYVDDLLETEESA</sequence>
<dbReference type="EMBL" id="AJ006469">
    <property type="protein sequence ID" value="CAA07053.1"/>
    <property type="molecule type" value="mRNA"/>
</dbReference>
<dbReference type="EMBL" id="AK017797">
    <property type="protein sequence ID" value="BAB30938.1"/>
    <property type="molecule type" value="mRNA"/>
</dbReference>
<dbReference type="EMBL" id="AK047506">
    <property type="protein sequence ID" value="BAC33076.1"/>
    <property type="molecule type" value="mRNA"/>
</dbReference>
<dbReference type="EMBL" id="BC049890">
    <property type="protein sequence ID" value="AAH49890.1"/>
    <property type="molecule type" value="mRNA"/>
</dbReference>
<dbReference type="CCDS" id="CCDS23592.1"/>
<dbReference type="RefSeq" id="NP_064306.2">
    <property type="nucleotide sequence ID" value="NM_019922.3"/>
</dbReference>
<dbReference type="SMR" id="Q9CYD3"/>
<dbReference type="CORUM" id="Q9CYD3"/>
<dbReference type="FunCoup" id="Q9CYD3">
    <property type="interactions" value="332"/>
</dbReference>
<dbReference type="STRING" id="10090.ENSMUSP00000081941"/>
<dbReference type="GlyConnect" id="2188">
    <property type="glycosylation" value="1 N-Linked glycan (1 site)"/>
</dbReference>
<dbReference type="GlyCosmos" id="Q9CYD3">
    <property type="glycosylation" value="2 sites, 1 glycan"/>
</dbReference>
<dbReference type="GlyGen" id="Q9CYD3">
    <property type="glycosylation" value="4 sites, 3 N-linked glycans (2 sites)"/>
</dbReference>
<dbReference type="iPTMnet" id="Q9CYD3"/>
<dbReference type="PhosphoSitePlus" id="Q9CYD3"/>
<dbReference type="jPOST" id="Q9CYD3"/>
<dbReference type="PaxDb" id="10090-ENSMUSP00000081941"/>
<dbReference type="PeptideAtlas" id="Q9CYD3"/>
<dbReference type="ProteomicsDB" id="285365"/>
<dbReference type="Pumba" id="Q9CYD3"/>
<dbReference type="Antibodypedia" id="27879">
    <property type="antibodies" value="259 antibodies from 29 providers"/>
</dbReference>
<dbReference type="DNASU" id="56693"/>
<dbReference type="Ensembl" id="ENSMUST00000084881.5">
    <property type="protein sequence ID" value="ENSMUSP00000081941.5"/>
    <property type="gene ID" value="ENSMUSG00000032431.7"/>
</dbReference>
<dbReference type="GeneID" id="56693"/>
<dbReference type="KEGG" id="mmu:56693"/>
<dbReference type="UCSC" id="uc009rxg.2">
    <property type="organism name" value="mouse"/>
</dbReference>
<dbReference type="AGR" id="MGI:1891221"/>
<dbReference type="CTD" id="10491"/>
<dbReference type="MGI" id="MGI:1891221">
    <property type="gene designation" value="Crtap"/>
</dbReference>
<dbReference type="VEuPathDB" id="HostDB:ENSMUSG00000032431"/>
<dbReference type="eggNOG" id="KOG4459">
    <property type="taxonomic scope" value="Eukaryota"/>
</dbReference>
<dbReference type="GeneTree" id="ENSGT00940000153814"/>
<dbReference type="HOGENOM" id="CLU_029887_0_1_1"/>
<dbReference type="InParanoid" id="Q9CYD3"/>
<dbReference type="OMA" id="WPETVEY"/>
<dbReference type="OrthoDB" id="8610171at2759"/>
<dbReference type="PhylomeDB" id="Q9CYD3"/>
<dbReference type="TreeFam" id="TF320837"/>
<dbReference type="BioGRID-ORCS" id="56693">
    <property type="hits" value="2 hits in 77 CRISPR screens"/>
</dbReference>
<dbReference type="ChiTaRS" id="Crtap">
    <property type="organism name" value="mouse"/>
</dbReference>
<dbReference type="PRO" id="PR:Q9CYD3"/>
<dbReference type="Proteomes" id="UP000000589">
    <property type="component" value="Chromosome 9"/>
</dbReference>
<dbReference type="RNAct" id="Q9CYD3">
    <property type="molecule type" value="protein"/>
</dbReference>
<dbReference type="Bgee" id="ENSMUSG00000032431">
    <property type="expression patterns" value="Expressed in vault of skull and 256 other cell types or tissues"/>
</dbReference>
<dbReference type="GO" id="GO:0005783">
    <property type="term" value="C:endoplasmic reticulum"/>
    <property type="evidence" value="ECO:0000314"/>
    <property type="project" value="MGI"/>
</dbReference>
<dbReference type="GO" id="GO:0005615">
    <property type="term" value="C:extracellular space"/>
    <property type="evidence" value="ECO:0007669"/>
    <property type="project" value="Ensembl"/>
</dbReference>
<dbReference type="GO" id="GO:0032991">
    <property type="term" value="C:protein-containing complex"/>
    <property type="evidence" value="ECO:0000250"/>
    <property type="project" value="CAFA"/>
</dbReference>
<dbReference type="GO" id="GO:0061077">
    <property type="term" value="P:chaperone-mediated protein folding"/>
    <property type="evidence" value="ECO:0000250"/>
    <property type="project" value="CAFA"/>
</dbReference>
<dbReference type="GO" id="GO:1901874">
    <property type="term" value="P:negative regulation of post-translational protein modification"/>
    <property type="evidence" value="ECO:0007669"/>
    <property type="project" value="Ensembl"/>
</dbReference>
<dbReference type="GO" id="GO:0050821">
    <property type="term" value="P:protein stabilization"/>
    <property type="evidence" value="ECO:0007669"/>
    <property type="project" value="Ensembl"/>
</dbReference>
<dbReference type="GO" id="GO:0007283">
    <property type="term" value="P:spermatogenesis"/>
    <property type="evidence" value="ECO:0000270"/>
    <property type="project" value="BHF-UCL"/>
</dbReference>
<dbReference type="FunFam" id="1.25.40.10:FF:000166">
    <property type="entry name" value="Cartilage associated protein"/>
    <property type="match status" value="1"/>
</dbReference>
<dbReference type="FunFam" id="1.25.40.10:FF:001015">
    <property type="entry name" value="Cartilage associated protein"/>
    <property type="match status" value="1"/>
</dbReference>
<dbReference type="Gene3D" id="1.25.40.10">
    <property type="entry name" value="Tetratricopeptide repeat domain"/>
    <property type="match status" value="2"/>
</dbReference>
<dbReference type="InterPro" id="IPR052284">
    <property type="entry name" value="Collagen_mod_leprecan"/>
</dbReference>
<dbReference type="InterPro" id="IPR056585">
    <property type="entry name" value="Leprecan_dom"/>
</dbReference>
<dbReference type="InterPro" id="IPR011990">
    <property type="entry name" value="TPR-like_helical_dom_sf"/>
</dbReference>
<dbReference type="PANTHER" id="PTHR13986:SF3">
    <property type="entry name" value="CARTILAGE-ASSOCIATED PROTEIN"/>
    <property type="match status" value="1"/>
</dbReference>
<dbReference type="PANTHER" id="PTHR13986">
    <property type="entry name" value="PROTEIN LYSINE HYDROXYLATION COMPLEX COMPONENT"/>
    <property type="match status" value="1"/>
</dbReference>
<dbReference type="Pfam" id="PF23557">
    <property type="entry name" value="TPR_leprecan"/>
    <property type="match status" value="1"/>
</dbReference>
<keyword id="KW-0272">Extracellular matrix</keyword>
<keyword id="KW-0325">Glycoprotein</keyword>
<keyword id="KW-0379">Hydroxylation</keyword>
<keyword id="KW-1185">Reference proteome</keyword>
<keyword id="KW-0964">Secreted</keyword>
<keyword id="KW-0732">Signal</keyword>
<reference key="1">
    <citation type="journal article" date="1999" name="Matrix Biol.">
        <title>cDNA cloning, characterization and chromosome mapping of Crtap encoding the mouse cartilage associated protein.</title>
        <authorList>
            <person name="Morello R."/>
            <person name="Tonachini L."/>
            <person name="Monticone M."/>
            <person name="Viggiano L."/>
            <person name="Rocchi M."/>
            <person name="Cancedda R."/>
            <person name="Castagnola P."/>
        </authorList>
    </citation>
    <scope>NUCLEOTIDE SEQUENCE [MRNA]</scope>
    <source>
        <tissue>Embryo</tissue>
    </source>
</reference>
<reference key="2">
    <citation type="journal article" date="2005" name="Science">
        <title>The transcriptional landscape of the mammalian genome.</title>
        <authorList>
            <person name="Carninci P."/>
            <person name="Kasukawa T."/>
            <person name="Katayama S."/>
            <person name="Gough J."/>
            <person name="Frith M.C."/>
            <person name="Maeda N."/>
            <person name="Oyama R."/>
            <person name="Ravasi T."/>
            <person name="Lenhard B."/>
            <person name="Wells C."/>
            <person name="Kodzius R."/>
            <person name="Shimokawa K."/>
            <person name="Bajic V.B."/>
            <person name="Brenner S.E."/>
            <person name="Batalov S."/>
            <person name="Forrest A.R."/>
            <person name="Zavolan M."/>
            <person name="Davis M.J."/>
            <person name="Wilming L.G."/>
            <person name="Aidinis V."/>
            <person name="Allen J.E."/>
            <person name="Ambesi-Impiombato A."/>
            <person name="Apweiler R."/>
            <person name="Aturaliya R.N."/>
            <person name="Bailey T.L."/>
            <person name="Bansal M."/>
            <person name="Baxter L."/>
            <person name="Beisel K.W."/>
            <person name="Bersano T."/>
            <person name="Bono H."/>
            <person name="Chalk A.M."/>
            <person name="Chiu K.P."/>
            <person name="Choudhary V."/>
            <person name="Christoffels A."/>
            <person name="Clutterbuck D.R."/>
            <person name="Crowe M.L."/>
            <person name="Dalla E."/>
            <person name="Dalrymple B.P."/>
            <person name="de Bono B."/>
            <person name="Della Gatta G."/>
            <person name="di Bernardo D."/>
            <person name="Down T."/>
            <person name="Engstrom P."/>
            <person name="Fagiolini M."/>
            <person name="Faulkner G."/>
            <person name="Fletcher C.F."/>
            <person name="Fukushima T."/>
            <person name="Furuno M."/>
            <person name="Futaki S."/>
            <person name="Gariboldi M."/>
            <person name="Georgii-Hemming P."/>
            <person name="Gingeras T.R."/>
            <person name="Gojobori T."/>
            <person name="Green R.E."/>
            <person name="Gustincich S."/>
            <person name="Harbers M."/>
            <person name="Hayashi Y."/>
            <person name="Hensch T.K."/>
            <person name="Hirokawa N."/>
            <person name="Hill D."/>
            <person name="Huminiecki L."/>
            <person name="Iacono M."/>
            <person name="Ikeo K."/>
            <person name="Iwama A."/>
            <person name="Ishikawa T."/>
            <person name="Jakt M."/>
            <person name="Kanapin A."/>
            <person name="Katoh M."/>
            <person name="Kawasawa Y."/>
            <person name="Kelso J."/>
            <person name="Kitamura H."/>
            <person name="Kitano H."/>
            <person name="Kollias G."/>
            <person name="Krishnan S.P."/>
            <person name="Kruger A."/>
            <person name="Kummerfeld S.K."/>
            <person name="Kurochkin I.V."/>
            <person name="Lareau L.F."/>
            <person name="Lazarevic D."/>
            <person name="Lipovich L."/>
            <person name="Liu J."/>
            <person name="Liuni S."/>
            <person name="McWilliam S."/>
            <person name="Madan Babu M."/>
            <person name="Madera M."/>
            <person name="Marchionni L."/>
            <person name="Matsuda H."/>
            <person name="Matsuzawa S."/>
            <person name="Miki H."/>
            <person name="Mignone F."/>
            <person name="Miyake S."/>
            <person name="Morris K."/>
            <person name="Mottagui-Tabar S."/>
            <person name="Mulder N."/>
            <person name="Nakano N."/>
            <person name="Nakauchi H."/>
            <person name="Ng P."/>
            <person name="Nilsson R."/>
            <person name="Nishiguchi S."/>
            <person name="Nishikawa S."/>
            <person name="Nori F."/>
            <person name="Ohara O."/>
            <person name="Okazaki Y."/>
            <person name="Orlando V."/>
            <person name="Pang K.C."/>
            <person name="Pavan W.J."/>
            <person name="Pavesi G."/>
            <person name="Pesole G."/>
            <person name="Petrovsky N."/>
            <person name="Piazza S."/>
            <person name="Reed J."/>
            <person name="Reid J.F."/>
            <person name="Ring B.Z."/>
            <person name="Ringwald M."/>
            <person name="Rost B."/>
            <person name="Ruan Y."/>
            <person name="Salzberg S.L."/>
            <person name="Sandelin A."/>
            <person name="Schneider C."/>
            <person name="Schoenbach C."/>
            <person name="Sekiguchi K."/>
            <person name="Semple C.A."/>
            <person name="Seno S."/>
            <person name="Sessa L."/>
            <person name="Sheng Y."/>
            <person name="Shibata Y."/>
            <person name="Shimada H."/>
            <person name="Shimada K."/>
            <person name="Silva D."/>
            <person name="Sinclair B."/>
            <person name="Sperling S."/>
            <person name="Stupka E."/>
            <person name="Sugiura K."/>
            <person name="Sultana R."/>
            <person name="Takenaka Y."/>
            <person name="Taki K."/>
            <person name="Tammoja K."/>
            <person name="Tan S.L."/>
            <person name="Tang S."/>
            <person name="Taylor M.S."/>
            <person name="Tegner J."/>
            <person name="Teichmann S.A."/>
            <person name="Ueda H.R."/>
            <person name="van Nimwegen E."/>
            <person name="Verardo R."/>
            <person name="Wei C.L."/>
            <person name="Yagi K."/>
            <person name="Yamanishi H."/>
            <person name="Zabarovsky E."/>
            <person name="Zhu S."/>
            <person name="Zimmer A."/>
            <person name="Hide W."/>
            <person name="Bult C."/>
            <person name="Grimmond S.M."/>
            <person name="Teasdale R.D."/>
            <person name="Liu E.T."/>
            <person name="Brusic V."/>
            <person name="Quackenbush J."/>
            <person name="Wahlestedt C."/>
            <person name="Mattick J.S."/>
            <person name="Hume D.A."/>
            <person name="Kai C."/>
            <person name="Sasaki D."/>
            <person name="Tomaru Y."/>
            <person name="Fukuda S."/>
            <person name="Kanamori-Katayama M."/>
            <person name="Suzuki M."/>
            <person name="Aoki J."/>
            <person name="Arakawa T."/>
            <person name="Iida J."/>
            <person name="Imamura K."/>
            <person name="Itoh M."/>
            <person name="Kato T."/>
            <person name="Kawaji H."/>
            <person name="Kawagashira N."/>
            <person name="Kawashima T."/>
            <person name="Kojima M."/>
            <person name="Kondo S."/>
            <person name="Konno H."/>
            <person name="Nakano K."/>
            <person name="Ninomiya N."/>
            <person name="Nishio T."/>
            <person name="Okada M."/>
            <person name="Plessy C."/>
            <person name="Shibata K."/>
            <person name="Shiraki T."/>
            <person name="Suzuki S."/>
            <person name="Tagami M."/>
            <person name="Waki K."/>
            <person name="Watahiki A."/>
            <person name="Okamura-Oho Y."/>
            <person name="Suzuki H."/>
            <person name="Kawai J."/>
            <person name="Hayashizaki Y."/>
        </authorList>
    </citation>
    <scope>NUCLEOTIDE SEQUENCE [LARGE SCALE MRNA]</scope>
    <source>
        <strain>C57BL/6J</strain>
        <tissue>Cerebellum</tissue>
        <tissue>Embryo</tissue>
    </source>
</reference>
<reference key="3">
    <citation type="journal article" date="2004" name="Genome Res.">
        <title>The status, quality, and expansion of the NIH full-length cDNA project: the Mammalian Gene Collection (MGC).</title>
        <authorList>
            <consortium name="The MGC Project Team"/>
        </authorList>
    </citation>
    <scope>NUCLEOTIDE SEQUENCE [LARGE SCALE MRNA]</scope>
    <source>
        <tissue>Olfactory epithelium</tissue>
    </source>
</reference>
<reference key="4">
    <citation type="journal article" date="2006" name="Cell">
        <title>CRTAP is required for prolyl 3-hydroxylation and mutations cause recessive osteogenesis imperfecta.</title>
        <authorList>
            <person name="Morello R."/>
            <person name="Bertin T.K."/>
            <person name="Chen Y."/>
            <person name="Hicks J."/>
            <person name="Tonachini L."/>
            <person name="Monticone M."/>
            <person name="Castagnola P."/>
            <person name="Rauch F."/>
            <person name="Glorieux F.H."/>
            <person name="Vranka J."/>
            <person name="Baechinger H.P."/>
            <person name="Pace J.M."/>
            <person name="Schwarze U."/>
            <person name="Byers P.H."/>
            <person name="Weis M."/>
            <person name="Fernandes R.J."/>
            <person name="Eyre D.R."/>
            <person name="Yao Z."/>
            <person name="Boyce B.F."/>
            <person name="Lee B."/>
        </authorList>
    </citation>
    <scope>FUNCTION</scope>
    <scope>TISSUE SPECIFICITY</scope>
    <scope>INVOLVEMENT IN OSTEOCHONDRODYSPLASIA</scope>
</reference>
<reference key="5">
    <citation type="journal article" date="2010" name="Cell">
        <title>A tissue-specific atlas of mouse protein phosphorylation and expression.</title>
        <authorList>
            <person name="Huttlin E.L."/>
            <person name="Jedrychowski M.P."/>
            <person name="Elias J.E."/>
            <person name="Goswami T."/>
            <person name="Rad R."/>
            <person name="Beausoleil S.A."/>
            <person name="Villen J."/>
            <person name="Haas W."/>
            <person name="Sowa M.E."/>
            <person name="Gygi S.P."/>
        </authorList>
    </citation>
    <scope>IDENTIFICATION BY MASS SPECTROMETRY [LARGE SCALE ANALYSIS]</scope>
    <source>
        <tissue>Kidney</tissue>
        <tissue>Lung</tissue>
    </source>
</reference>
<organism>
    <name type="scientific">Mus musculus</name>
    <name type="common">Mouse</name>
    <dbReference type="NCBI Taxonomy" id="10090"/>
    <lineage>
        <taxon>Eukaryota</taxon>
        <taxon>Metazoa</taxon>
        <taxon>Chordata</taxon>
        <taxon>Craniata</taxon>
        <taxon>Vertebrata</taxon>
        <taxon>Euteleostomi</taxon>
        <taxon>Mammalia</taxon>
        <taxon>Eutheria</taxon>
        <taxon>Euarchontoglires</taxon>
        <taxon>Glires</taxon>
        <taxon>Rodentia</taxon>
        <taxon>Myomorpha</taxon>
        <taxon>Muroidea</taxon>
        <taxon>Muridae</taxon>
        <taxon>Murinae</taxon>
        <taxon>Mus</taxon>
        <taxon>Mus</taxon>
    </lineage>
</organism>
<evidence type="ECO:0000255" key="1"/>
<evidence type="ECO:0000269" key="2">
    <source>
    </source>
</evidence>
<evidence type="ECO:0000305" key="3"/>
<proteinExistence type="evidence at protein level"/>
<name>CRTAP_MOUSE</name>
<feature type="signal peptide" evidence="1">
    <location>
        <begin position="1"/>
        <end position="25"/>
    </location>
</feature>
<feature type="chain" id="PRO_0000006320" description="Cartilage-associated protein">
    <location>
        <begin position="26"/>
        <end position="400"/>
    </location>
</feature>
<feature type="glycosylation site" description="N-linked (GlcNAc...) asparagine" evidence="1">
    <location>
        <position position="86"/>
    </location>
</feature>
<feature type="glycosylation site" description="N-linked (GlcNAc...) asparagine" evidence="1">
    <location>
        <position position="362"/>
    </location>
</feature>
<feature type="sequence conflict" description="In Ref. 1; CAA07053." evidence="3" ref="1">
    <original>T</original>
    <variation>A</variation>
    <location>
        <position position="7"/>
    </location>
</feature>
<feature type="sequence conflict" description="In Ref. 1; CAA07053." evidence="3" ref="1">
    <original>S</original>
    <variation>N</variation>
    <location>
        <position position="34"/>
    </location>
</feature>
<feature type="sequence conflict" description="In Ref. 2; BAB30938." evidence="3" ref="2">
    <original>SE</original>
    <variation>RQ</variation>
    <location>
        <begin position="79"/>
        <end position="80"/>
    </location>
</feature>
<feature type="sequence conflict" description="In Ref. 2; BAB30938." evidence="3" ref="2">
    <original>SR</original>
    <variation>VA</variation>
    <location>
        <begin position="249"/>
        <end position="250"/>
    </location>
</feature>
<feature type="sequence conflict" description="In Ref. 2; BAB30938." evidence="3" ref="2">
    <original>D</original>
    <variation>T</variation>
    <location>
        <position position="254"/>
    </location>
</feature>
<comment type="function">
    <text evidence="2">Necessary for efficient 3-hydroxylation of fibrillar collagen prolyl residues.</text>
</comment>
<comment type="subcellular location">
    <subcellularLocation>
        <location>Secreted</location>
        <location>Extracellular space</location>
        <location>Extracellular matrix</location>
    </subcellularLocation>
</comment>
<comment type="tissue specificity">
    <text evidence="2">Found in articular chondrocytes. Expressed in a variety of tissues.</text>
</comment>
<comment type="disease">
    <text evidence="2">Defects in Crtap are a cause of osteochondrodysplasia characterized by severe osteoporosis and decreased osteoid production.</text>
</comment>
<comment type="similarity">
    <text evidence="3">Belongs to the leprecan family.</text>
</comment>
<gene>
    <name type="primary">Crtap</name>
    <name type="synonym">Casp</name>
</gene>
<protein>
    <recommendedName>
        <fullName>Cartilage-associated protein</fullName>
    </recommendedName>
</protein>